<feature type="chain" id="PRO_1000061626" description="UPF0246 protein PST_1170">
    <location>
        <begin position="1"/>
        <end position="259"/>
    </location>
</feature>
<comment type="similarity">
    <text evidence="1">Belongs to the UPF0246 family.</text>
</comment>
<evidence type="ECO:0000255" key="1">
    <source>
        <dbReference type="HAMAP-Rule" id="MF_00652"/>
    </source>
</evidence>
<protein>
    <recommendedName>
        <fullName evidence="1">UPF0246 protein PST_1170</fullName>
    </recommendedName>
</protein>
<organism>
    <name type="scientific">Stutzerimonas stutzeri (strain A1501)</name>
    <name type="common">Pseudomonas stutzeri</name>
    <dbReference type="NCBI Taxonomy" id="379731"/>
    <lineage>
        <taxon>Bacteria</taxon>
        <taxon>Pseudomonadati</taxon>
        <taxon>Pseudomonadota</taxon>
        <taxon>Gammaproteobacteria</taxon>
        <taxon>Pseudomonadales</taxon>
        <taxon>Pseudomonadaceae</taxon>
        <taxon>Stutzerimonas</taxon>
    </lineage>
</organism>
<keyword id="KW-1185">Reference proteome</keyword>
<proteinExistence type="inferred from homology"/>
<reference key="1">
    <citation type="journal article" date="2008" name="Proc. Natl. Acad. Sci. U.S.A.">
        <title>Nitrogen fixation island and rhizosphere competence traits in the genome of root-associated Pseudomonas stutzeri A1501.</title>
        <authorList>
            <person name="Yan Y."/>
            <person name="Yang J."/>
            <person name="Dou Y."/>
            <person name="Chen M."/>
            <person name="Ping S."/>
            <person name="Peng J."/>
            <person name="Lu W."/>
            <person name="Zhang W."/>
            <person name="Yao Z."/>
            <person name="Li H."/>
            <person name="Liu W."/>
            <person name="He S."/>
            <person name="Geng L."/>
            <person name="Zhang X."/>
            <person name="Yang F."/>
            <person name="Yu H."/>
            <person name="Zhan Y."/>
            <person name="Li D."/>
            <person name="Lin Z."/>
            <person name="Wang Y."/>
            <person name="Elmerich C."/>
            <person name="Lin M."/>
            <person name="Jin Q."/>
        </authorList>
    </citation>
    <scope>NUCLEOTIDE SEQUENCE [LARGE SCALE GENOMIC DNA]</scope>
    <source>
        <strain>A1501</strain>
    </source>
</reference>
<accession>A4VIR4</accession>
<sequence>MLMVISPAKTLDYDTPPITERFTQPQYLDHSQQLIELLRRYSPAQISELMHLSDKLAALNVARYGSWTPAFTPSNAKQALLAFKGDVYTGLNADDFTEDDLLFAQKHLRMLSGLYGLLRPLDLMQPYRLEMGTKLTNPRGKDLYAFWGERISDWLNEALADQGDDVLLNLASNEYFSAVKRNALNARIINVDFKDMKNGQYKIISFYAKKARGLMARWIIKERISTPDQLSAFDYEGYRYSANDSSADHLVFLRDASDQ</sequence>
<gene>
    <name type="ordered locus">PST_1170</name>
</gene>
<name>Y1170_STUS1</name>
<dbReference type="EMBL" id="CP000304">
    <property type="protein sequence ID" value="ABP78865.1"/>
    <property type="molecule type" value="Genomic_DNA"/>
</dbReference>
<dbReference type="RefSeq" id="WP_011912352.1">
    <property type="nucleotide sequence ID" value="NC_009434.1"/>
</dbReference>
<dbReference type="SMR" id="A4VIR4"/>
<dbReference type="KEGG" id="psa:PST_1170"/>
<dbReference type="eggNOG" id="COG3022">
    <property type="taxonomic scope" value="Bacteria"/>
</dbReference>
<dbReference type="HOGENOM" id="CLU_061989_0_0_6"/>
<dbReference type="Proteomes" id="UP000000233">
    <property type="component" value="Chromosome"/>
</dbReference>
<dbReference type="GO" id="GO:0005829">
    <property type="term" value="C:cytosol"/>
    <property type="evidence" value="ECO:0007669"/>
    <property type="project" value="TreeGrafter"/>
</dbReference>
<dbReference type="GO" id="GO:0033194">
    <property type="term" value="P:response to hydroperoxide"/>
    <property type="evidence" value="ECO:0007669"/>
    <property type="project" value="TreeGrafter"/>
</dbReference>
<dbReference type="HAMAP" id="MF_00652">
    <property type="entry name" value="UPF0246"/>
    <property type="match status" value="1"/>
</dbReference>
<dbReference type="InterPro" id="IPR005583">
    <property type="entry name" value="YaaA"/>
</dbReference>
<dbReference type="NCBIfam" id="NF002541">
    <property type="entry name" value="PRK02101.1-1"/>
    <property type="match status" value="1"/>
</dbReference>
<dbReference type="NCBIfam" id="NF002542">
    <property type="entry name" value="PRK02101.1-3"/>
    <property type="match status" value="1"/>
</dbReference>
<dbReference type="PANTHER" id="PTHR30283:SF4">
    <property type="entry name" value="PEROXIDE STRESS RESISTANCE PROTEIN YAAA"/>
    <property type="match status" value="1"/>
</dbReference>
<dbReference type="PANTHER" id="PTHR30283">
    <property type="entry name" value="PEROXIDE STRESS RESPONSE PROTEIN YAAA"/>
    <property type="match status" value="1"/>
</dbReference>
<dbReference type="Pfam" id="PF03883">
    <property type="entry name" value="H2O2_YaaD"/>
    <property type="match status" value="1"/>
</dbReference>